<feature type="chain" id="PRO_0000387451" description="tRNA1(Val) (adenine(37)-N6)-methyltransferase">
    <location>
        <begin position="1"/>
        <end position="252"/>
    </location>
</feature>
<feature type="sequence conflict" description="In Ref. 2; AAM84862." evidence="2" ref="2">
    <original>V</original>
    <variation>I</variation>
    <location>
        <position position="236"/>
    </location>
</feature>
<sequence>MVTNVGEQLKKQPVLRGGGFTFKQFFVAHDRCAMKVGTDGVLLGAWVPVLHARRVLDIGCGSGLIALMIAQRSLPQVQIDGVELEPAAAQQASSNVELSPWAERIHIHQQDIHQFAENHPHQYDLIVSNPPYFAPAIACRDEARDTARYTGSLTHDALLNCAEKLITEDGMFCVVLPHELGIEFARLAGQQGWFVRCQVDIRDRPGKPLHRMLLTLSRQAGETVYQHLALRQSEGVYSPEFCQLISDFYLNY</sequence>
<accession>Q74SR9</accession>
<accession>Q8D102</accession>
<comment type="function">
    <text evidence="1">Specifically methylates the adenine in position 37 of tRNA(1)(Val) (anticodon cmo5UAC).</text>
</comment>
<comment type="catalytic activity">
    <reaction evidence="1">
        <text>adenosine(37) in tRNA1(Val) + S-adenosyl-L-methionine = N(6)-methyladenosine(37) in tRNA1(Val) + S-adenosyl-L-homocysteine + H(+)</text>
        <dbReference type="Rhea" id="RHEA:43160"/>
        <dbReference type="Rhea" id="RHEA-COMP:10369"/>
        <dbReference type="Rhea" id="RHEA-COMP:10370"/>
        <dbReference type="ChEBI" id="CHEBI:15378"/>
        <dbReference type="ChEBI" id="CHEBI:57856"/>
        <dbReference type="ChEBI" id="CHEBI:59789"/>
        <dbReference type="ChEBI" id="CHEBI:74411"/>
        <dbReference type="ChEBI" id="CHEBI:74449"/>
        <dbReference type="EC" id="2.1.1.223"/>
    </reaction>
</comment>
<comment type="subcellular location">
    <subcellularLocation>
        <location evidence="1">Cytoplasm</location>
    </subcellularLocation>
</comment>
<comment type="similarity">
    <text evidence="1">Belongs to the methyltransferase superfamily. tRNA (adenine-N(6)-)-methyltransferase family.</text>
</comment>
<name>TRMN6_YERPE</name>
<dbReference type="EC" id="2.1.1.223" evidence="1"/>
<dbReference type="EMBL" id="AL590842">
    <property type="protein sequence ID" value="CAL21328.1"/>
    <property type="molecule type" value="Genomic_DNA"/>
</dbReference>
<dbReference type="EMBL" id="AE009952">
    <property type="protein sequence ID" value="AAM84862.1"/>
    <property type="molecule type" value="Genomic_DNA"/>
</dbReference>
<dbReference type="EMBL" id="AE017042">
    <property type="protein sequence ID" value="AAS62711.1"/>
    <property type="molecule type" value="Genomic_DNA"/>
</dbReference>
<dbReference type="PIR" id="AE0330">
    <property type="entry name" value="AE0330"/>
</dbReference>
<dbReference type="RefSeq" id="YP_002347656.1">
    <property type="nucleotide sequence ID" value="NC_003143.1"/>
</dbReference>
<dbReference type="SMR" id="Q74SR9"/>
<dbReference type="IntAct" id="Q74SR9">
    <property type="interactions" value="2"/>
</dbReference>
<dbReference type="STRING" id="214092.YPO2709"/>
<dbReference type="PaxDb" id="214092-YPO2709"/>
<dbReference type="DNASU" id="1146235"/>
<dbReference type="EnsemblBacteria" id="AAS62711">
    <property type="protein sequence ID" value="AAS62711"/>
    <property type="gene ID" value="YP_2513"/>
</dbReference>
<dbReference type="KEGG" id="ype:YPO2709"/>
<dbReference type="KEGG" id="ypk:y1288"/>
<dbReference type="KEGG" id="ypm:YP_2513"/>
<dbReference type="PATRIC" id="fig|214092.21.peg.3149"/>
<dbReference type="eggNOG" id="COG4123">
    <property type="taxonomic scope" value="Bacteria"/>
</dbReference>
<dbReference type="HOGENOM" id="CLU_061983_0_0_6"/>
<dbReference type="OMA" id="NQYTEAF"/>
<dbReference type="OrthoDB" id="5383291at2"/>
<dbReference type="Proteomes" id="UP000000815">
    <property type="component" value="Chromosome"/>
</dbReference>
<dbReference type="Proteomes" id="UP000001019">
    <property type="component" value="Chromosome"/>
</dbReference>
<dbReference type="Proteomes" id="UP000002490">
    <property type="component" value="Chromosome"/>
</dbReference>
<dbReference type="GO" id="GO:0005737">
    <property type="term" value="C:cytoplasm"/>
    <property type="evidence" value="ECO:0007669"/>
    <property type="project" value="UniProtKB-SubCell"/>
</dbReference>
<dbReference type="GO" id="GO:0003676">
    <property type="term" value="F:nucleic acid binding"/>
    <property type="evidence" value="ECO:0007669"/>
    <property type="project" value="InterPro"/>
</dbReference>
<dbReference type="GO" id="GO:0016430">
    <property type="term" value="F:tRNA (adenine-N6)-methyltransferase activity"/>
    <property type="evidence" value="ECO:0007669"/>
    <property type="project" value="UniProtKB-UniRule"/>
</dbReference>
<dbReference type="GO" id="GO:0032259">
    <property type="term" value="P:methylation"/>
    <property type="evidence" value="ECO:0007669"/>
    <property type="project" value="UniProtKB-KW"/>
</dbReference>
<dbReference type="GO" id="GO:0008033">
    <property type="term" value="P:tRNA processing"/>
    <property type="evidence" value="ECO:0007669"/>
    <property type="project" value="UniProtKB-UniRule"/>
</dbReference>
<dbReference type="CDD" id="cd02440">
    <property type="entry name" value="AdoMet_MTases"/>
    <property type="match status" value="1"/>
</dbReference>
<dbReference type="Gene3D" id="3.40.50.150">
    <property type="entry name" value="Vaccinia Virus protein VP39"/>
    <property type="match status" value="1"/>
</dbReference>
<dbReference type="HAMAP" id="MF_01872">
    <property type="entry name" value="tRNA_methyltr_YfiC"/>
    <property type="match status" value="1"/>
</dbReference>
<dbReference type="InterPro" id="IPR002052">
    <property type="entry name" value="DNA_methylase_N6_adenine_CS"/>
</dbReference>
<dbReference type="InterPro" id="IPR029063">
    <property type="entry name" value="SAM-dependent_MTases_sf"/>
</dbReference>
<dbReference type="InterPro" id="IPR007848">
    <property type="entry name" value="Small_mtfrase_dom"/>
</dbReference>
<dbReference type="InterPro" id="IPR050210">
    <property type="entry name" value="tRNA_Adenine-N(6)_MTase"/>
</dbReference>
<dbReference type="InterPro" id="IPR022882">
    <property type="entry name" value="tRNA_adenine-N6_MeTrfase"/>
</dbReference>
<dbReference type="NCBIfam" id="NF047853">
    <property type="entry name" value="tRm6a37MtseTrmN"/>
    <property type="match status" value="1"/>
</dbReference>
<dbReference type="PANTHER" id="PTHR47739">
    <property type="entry name" value="TRNA1(VAL) (ADENINE(37)-N6)-METHYLTRANSFERASE"/>
    <property type="match status" value="1"/>
</dbReference>
<dbReference type="PANTHER" id="PTHR47739:SF1">
    <property type="entry name" value="TRNA1(VAL) (ADENINE(37)-N6)-METHYLTRANSFERASE"/>
    <property type="match status" value="1"/>
</dbReference>
<dbReference type="Pfam" id="PF05175">
    <property type="entry name" value="MTS"/>
    <property type="match status" value="1"/>
</dbReference>
<dbReference type="PRINTS" id="PR00507">
    <property type="entry name" value="N12N6MTFRASE"/>
</dbReference>
<dbReference type="SUPFAM" id="SSF53335">
    <property type="entry name" value="S-adenosyl-L-methionine-dependent methyltransferases"/>
    <property type="match status" value="1"/>
</dbReference>
<dbReference type="PROSITE" id="PS00092">
    <property type="entry name" value="N6_MTASE"/>
    <property type="match status" value="1"/>
</dbReference>
<reference key="1">
    <citation type="journal article" date="2001" name="Nature">
        <title>Genome sequence of Yersinia pestis, the causative agent of plague.</title>
        <authorList>
            <person name="Parkhill J."/>
            <person name="Wren B.W."/>
            <person name="Thomson N.R."/>
            <person name="Titball R.W."/>
            <person name="Holden M.T.G."/>
            <person name="Prentice M.B."/>
            <person name="Sebaihia M."/>
            <person name="James K.D."/>
            <person name="Churcher C.M."/>
            <person name="Mungall K.L."/>
            <person name="Baker S."/>
            <person name="Basham D."/>
            <person name="Bentley S.D."/>
            <person name="Brooks K."/>
            <person name="Cerdeno-Tarraga A.-M."/>
            <person name="Chillingworth T."/>
            <person name="Cronin A."/>
            <person name="Davies R.M."/>
            <person name="Davis P."/>
            <person name="Dougan G."/>
            <person name="Feltwell T."/>
            <person name="Hamlin N."/>
            <person name="Holroyd S."/>
            <person name="Jagels K."/>
            <person name="Karlyshev A.V."/>
            <person name="Leather S."/>
            <person name="Moule S."/>
            <person name="Oyston P.C.F."/>
            <person name="Quail M.A."/>
            <person name="Rutherford K.M."/>
            <person name="Simmonds M."/>
            <person name="Skelton J."/>
            <person name="Stevens K."/>
            <person name="Whitehead S."/>
            <person name="Barrell B.G."/>
        </authorList>
    </citation>
    <scope>NUCLEOTIDE SEQUENCE [LARGE SCALE GENOMIC DNA]</scope>
    <source>
        <strain>CO-92 / Biovar Orientalis</strain>
    </source>
</reference>
<reference key="2">
    <citation type="journal article" date="2002" name="J. Bacteriol.">
        <title>Genome sequence of Yersinia pestis KIM.</title>
        <authorList>
            <person name="Deng W."/>
            <person name="Burland V."/>
            <person name="Plunkett G. III"/>
            <person name="Boutin A."/>
            <person name="Mayhew G.F."/>
            <person name="Liss P."/>
            <person name="Perna N.T."/>
            <person name="Rose D.J."/>
            <person name="Mau B."/>
            <person name="Zhou S."/>
            <person name="Schwartz D.C."/>
            <person name="Fetherston J.D."/>
            <person name="Lindler L.E."/>
            <person name="Brubaker R.R."/>
            <person name="Plano G.V."/>
            <person name="Straley S.C."/>
            <person name="McDonough K.A."/>
            <person name="Nilles M.L."/>
            <person name="Matson J.S."/>
            <person name="Blattner F.R."/>
            <person name="Perry R.D."/>
        </authorList>
    </citation>
    <scope>NUCLEOTIDE SEQUENCE [LARGE SCALE GENOMIC DNA]</scope>
    <source>
        <strain>KIM10+ / Biovar Mediaevalis</strain>
    </source>
</reference>
<reference key="3">
    <citation type="journal article" date="2004" name="DNA Res.">
        <title>Complete genome sequence of Yersinia pestis strain 91001, an isolate avirulent to humans.</title>
        <authorList>
            <person name="Song Y."/>
            <person name="Tong Z."/>
            <person name="Wang J."/>
            <person name="Wang L."/>
            <person name="Guo Z."/>
            <person name="Han Y."/>
            <person name="Zhang J."/>
            <person name="Pei D."/>
            <person name="Zhou D."/>
            <person name="Qin H."/>
            <person name="Pang X."/>
            <person name="Han Y."/>
            <person name="Zhai J."/>
            <person name="Li M."/>
            <person name="Cui B."/>
            <person name="Qi Z."/>
            <person name="Jin L."/>
            <person name="Dai R."/>
            <person name="Chen F."/>
            <person name="Li S."/>
            <person name="Ye C."/>
            <person name="Du Z."/>
            <person name="Lin W."/>
            <person name="Wang J."/>
            <person name="Yu J."/>
            <person name="Yang H."/>
            <person name="Wang J."/>
            <person name="Huang P."/>
            <person name="Yang R."/>
        </authorList>
    </citation>
    <scope>NUCLEOTIDE SEQUENCE [LARGE SCALE GENOMIC DNA]</scope>
    <source>
        <strain>91001 / Biovar Mediaevalis</strain>
    </source>
</reference>
<evidence type="ECO:0000255" key="1">
    <source>
        <dbReference type="HAMAP-Rule" id="MF_01872"/>
    </source>
</evidence>
<evidence type="ECO:0000305" key="2"/>
<gene>
    <name type="ordered locus">YPO2709</name>
    <name type="ordered locus">y1288</name>
    <name type="ordered locus">YP_2513</name>
</gene>
<protein>
    <recommendedName>
        <fullName evidence="1">tRNA1(Val) (adenine(37)-N6)-methyltransferase</fullName>
        <ecNumber evidence="1">2.1.1.223</ecNumber>
    </recommendedName>
    <alternativeName>
        <fullName evidence="1">tRNA m6A37 methyltransferase</fullName>
    </alternativeName>
</protein>
<proteinExistence type="inferred from homology"/>
<keyword id="KW-0963">Cytoplasm</keyword>
<keyword id="KW-0489">Methyltransferase</keyword>
<keyword id="KW-1185">Reference proteome</keyword>
<keyword id="KW-0949">S-adenosyl-L-methionine</keyword>
<keyword id="KW-0808">Transferase</keyword>
<keyword id="KW-0819">tRNA processing</keyword>
<organism>
    <name type="scientific">Yersinia pestis</name>
    <dbReference type="NCBI Taxonomy" id="632"/>
    <lineage>
        <taxon>Bacteria</taxon>
        <taxon>Pseudomonadati</taxon>
        <taxon>Pseudomonadota</taxon>
        <taxon>Gammaproteobacteria</taxon>
        <taxon>Enterobacterales</taxon>
        <taxon>Yersiniaceae</taxon>
        <taxon>Yersinia</taxon>
    </lineage>
</organism>